<name>YIDD_STAA8</name>
<dbReference type="EMBL" id="CP000253">
    <property type="protein sequence ID" value="ABD30977.1"/>
    <property type="molecule type" value="Genomic_DNA"/>
</dbReference>
<dbReference type="RefSeq" id="YP_500415.1">
    <property type="nucleotide sequence ID" value="NC_007795.1"/>
</dbReference>
<dbReference type="STRING" id="93061.SAOUHSC_01914"/>
<dbReference type="PaxDb" id="1280-SAXN108_1823"/>
<dbReference type="GeneID" id="3921056"/>
<dbReference type="KEGG" id="sao:SAOUHSC_01914"/>
<dbReference type="PATRIC" id="fig|93061.5.peg.1743"/>
<dbReference type="eggNOG" id="COG0759">
    <property type="taxonomic scope" value="Bacteria"/>
</dbReference>
<dbReference type="HOGENOM" id="CLU_144811_6_0_9"/>
<dbReference type="OrthoDB" id="9801753at2"/>
<dbReference type="PRO" id="PR:Q2G2V4"/>
<dbReference type="Proteomes" id="UP000008816">
    <property type="component" value="Chromosome"/>
</dbReference>
<dbReference type="GO" id="GO:0005886">
    <property type="term" value="C:plasma membrane"/>
    <property type="evidence" value="ECO:0007669"/>
    <property type="project" value="UniProtKB-SubCell"/>
</dbReference>
<dbReference type="HAMAP" id="MF_00386">
    <property type="entry name" value="UPF0161_YidD"/>
    <property type="match status" value="1"/>
</dbReference>
<dbReference type="InterPro" id="IPR002696">
    <property type="entry name" value="Membr_insert_effic_factor_YidD"/>
</dbReference>
<dbReference type="NCBIfam" id="TIGR00278">
    <property type="entry name" value="membrane protein insertion efficiency factor YidD"/>
    <property type="match status" value="1"/>
</dbReference>
<dbReference type="PANTHER" id="PTHR33383">
    <property type="entry name" value="MEMBRANE PROTEIN INSERTION EFFICIENCY FACTOR-RELATED"/>
    <property type="match status" value="1"/>
</dbReference>
<dbReference type="PANTHER" id="PTHR33383:SF1">
    <property type="entry name" value="MEMBRANE PROTEIN INSERTION EFFICIENCY FACTOR-RELATED"/>
    <property type="match status" value="1"/>
</dbReference>
<dbReference type="Pfam" id="PF01809">
    <property type="entry name" value="YidD"/>
    <property type="match status" value="1"/>
</dbReference>
<dbReference type="SMART" id="SM01234">
    <property type="entry name" value="Haemolytic"/>
    <property type="match status" value="1"/>
</dbReference>
<evidence type="ECO:0000255" key="1">
    <source>
        <dbReference type="HAMAP-Rule" id="MF_00386"/>
    </source>
</evidence>
<evidence type="ECO:0000256" key="2">
    <source>
        <dbReference type="SAM" id="MobiDB-lite"/>
    </source>
</evidence>
<reference key="1">
    <citation type="book" date="2006" name="Gram positive pathogens, 2nd edition">
        <title>The Staphylococcus aureus NCTC 8325 genome.</title>
        <editorList>
            <person name="Fischetti V."/>
            <person name="Novick R."/>
            <person name="Ferretti J."/>
            <person name="Portnoy D."/>
            <person name="Rood J."/>
        </editorList>
        <authorList>
            <person name="Gillaspy A.F."/>
            <person name="Worrell V."/>
            <person name="Orvis J."/>
            <person name="Roe B.A."/>
            <person name="Dyer D.W."/>
            <person name="Iandolo J.J."/>
        </authorList>
    </citation>
    <scope>NUCLEOTIDE SEQUENCE [LARGE SCALE GENOMIC DNA]</scope>
    <source>
        <strain>NCTC 8325 / PS 47</strain>
    </source>
</reference>
<proteinExistence type="inferred from homology"/>
<organism>
    <name type="scientific">Staphylococcus aureus (strain NCTC 8325 / PS 47)</name>
    <dbReference type="NCBI Taxonomy" id="93061"/>
    <lineage>
        <taxon>Bacteria</taxon>
        <taxon>Bacillati</taxon>
        <taxon>Bacillota</taxon>
        <taxon>Bacilli</taxon>
        <taxon>Bacillales</taxon>
        <taxon>Staphylococcaceae</taxon>
        <taxon>Staphylococcus</taxon>
    </lineage>
</organism>
<protein>
    <recommendedName>
        <fullName evidence="1">Putative membrane protein insertion efficiency factor</fullName>
    </recommendedName>
</protein>
<keyword id="KW-1003">Cell membrane</keyword>
<keyword id="KW-0472">Membrane</keyword>
<keyword id="KW-1185">Reference proteome</keyword>
<feature type="chain" id="PRO_0000253174" description="Putative membrane protein insertion efficiency factor">
    <location>
        <begin position="1"/>
        <end position="85"/>
    </location>
</feature>
<feature type="region of interest" description="Disordered" evidence="2">
    <location>
        <begin position="62"/>
        <end position="85"/>
    </location>
</feature>
<comment type="function">
    <text evidence="1">Could be involved in insertion of integral membrane proteins into the membrane.</text>
</comment>
<comment type="subcellular location">
    <subcellularLocation>
        <location evidence="1">Cell membrane</location>
        <topology evidence="1">Peripheral membrane protein</topology>
        <orientation evidence="1">Cytoplasmic side</orientation>
    </subcellularLocation>
</comment>
<comment type="similarity">
    <text evidence="1">Belongs to the UPF0161 family.</text>
</comment>
<accession>Q2G2V4</accession>
<gene>
    <name type="ordered locus">SAOUHSC_01914</name>
</gene>
<sequence length="85" mass="9967">MKKIFLAMIHFYQRFISPLTPPTCRFYPTCSEYTREAIQYHGAFKGLYLGIRRILKCHPLHKGGFDPVPLKKDKSASKHSHKHNH</sequence>